<sequence>MHKGKKNYPNLITSFRMNLKKIILNHDRFSHPERWKTNALLRFTFVYIKFLFDLMIIKNPLRMVGKTYRDAVTALNSLQSNYANIMAIRQTGDRKNTMTLLEMHEWSRRIGYSASDFNKLNIVHITGTKGKGSTAAFTSSILGQYKEQLPRIGLYTSPHLKSVRERIRINGEPISEEKFAKYFFEVWDRLDSTTSSLDKFPHMIPGSKPGYFKFLTLLSFHTFIQEDCKSCVYEVGVGGELDSTNIIEKPIVCGVTLLGIDHTFMLGDTIEEIAWNKGGIFKSGAPAFTVEKQPPQGLTILKERAEERKTTLTEVPPFKQLENVKLGIAGEFQKSNASLAVMLASEILHTSNILEEKIKCSSNASIPEKFIIGLQNTKWEGRCQVLEKGKNVWYIDGAHTKDSMVAASTWFRDMVRLSKRKKILLFNQQSRDANALVNNLYSSVSPEITFDDVIFTTNVTWKSGSYSADLVSMNTSQEDVEKLKVQESLVKNWNKIDDNRAKTHVTASIEEANELIETLYDEPADIFVTGSLHLVGGLLVVFDRIDVK</sequence>
<evidence type="ECO:0000250" key="1">
    <source>
        <dbReference type="UniProtKB" id="P08192"/>
    </source>
</evidence>
<evidence type="ECO:0000250" key="2">
    <source>
        <dbReference type="UniProtKB" id="Q08645"/>
    </source>
</evidence>
<evidence type="ECO:0000312" key="3">
    <source>
        <dbReference type="EMBL" id="EDN63570.1"/>
    </source>
</evidence>
<dbReference type="EC" id="6.3.2.17" evidence="2"/>
<dbReference type="EMBL" id="AAFW02000032">
    <property type="protein sequence ID" value="EDN63570.1"/>
    <property type="molecule type" value="Genomic_DNA"/>
</dbReference>
<dbReference type="SMR" id="A6ZP80"/>
<dbReference type="HOGENOM" id="CLU_015869_0_1_1"/>
<dbReference type="UniPathway" id="UPA00850"/>
<dbReference type="Proteomes" id="UP000007060">
    <property type="component" value="Unassembled WGS sequence"/>
</dbReference>
<dbReference type="GO" id="GO:0005829">
    <property type="term" value="C:cytosol"/>
    <property type="evidence" value="ECO:0007669"/>
    <property type="project" value="TreeGrafter"/>
</dbReference>
<dbReference type="GO" id="GO:0005743">
    <property type="term" value="C:mitochondrial inner membrane"/>
    <property type="evidence" value="ECO:0007669"/>
    <property type="project" value="UniProtKB-SubCell"/>
</dbReference>
<dbReference type="GO" id="GO:0005759">
    <property type="term" value="C:mitochondrial matrix"/>
    <property type="evidence" value="ECO:0007669"/>
    <property type="project" value="UniProtKB-SubCell"/>
</dbReference>
<dbReference type="GO" id="GO:0005524">
    <property type="term" value="F:ATP binding"/>
    <property type="evidence" value="ECO:0007669"/>
    <property type="project" value="UniProtKB-KW"/>
</dbReference>
<dbReference type="GO" id="GO:0046872">
    <property type="term" value="F:metal ion binding"/>
    <property type="evidence" value="ECO:0007669"/>
    <property type="project" value="UniProtKB-KW"/>
</dbReference>
<dbReference type="GO" id="GO:0004326">
    <property type="term" value="F:tetrahydrofolylpolyglutamate synthase activity"/>
    <property type="evidence" value="ECO:0007669"/>
    <property type="project" value="UniProtKB-EC"/>
</dbReference>
<dbReference type="GO" id="GO:0006730">
    <property type="term" value="P:one-carbon metabolic process"/>
    <property type="evidence" value="ECO:0007669"/>
    <property type="project" value="UniProtKB-KW"/>
</dbReference>
<dbReference type="FunFam" id="3.40.1190.10:FF:000009">
    <property type="entry name" value="Folylpolyglutamate synthase"/>
    <property type="match status" value="1"/>
</dbReference>
<dbReference type="FunFam" id="3.90.190.20:FF:000009">
    <property type="entry name" value="Folylpolyglutamate synthase"/>
    <property type="match status" value="1"/>
</dbReference>
<dbReference type="Gene3D" id="3.90.190.20">
    <property type="entry name" value="Mur ligase, C-terminal domain"/>
    <property type="match status" value="1"/>
</dbReference>
<dbReference type="Gene3D" id="3.40.1190.10">
    <property type="entry name" value="Mur-like, catalytic domain"/>
    <property type="match status" value="1"/>
</dbReference>
<dbReference type="InterPro" id="IPR001645">
    <property type="entry name" value="Folylpolyglutamate_synth"/>
</dbReference>
<dbReference type="InterPro" id="IPR018109">
    <property type="entry name" value="Folylpolyglutamate_synth_CS"/>
</dbReference>
<dbReference type="InterPro" id="IPR023600">
    <property type="entry name" value="Folylpolyglutamate_synth_euk"/>
</dbReference>
<dbReference type="InterPro" id="IPR036565">
    <property type="entry name" value="Mur-like_cat_sf"/>
</dbReference>
<dbReference type="InterPro" id="IPR036615">
    <property type="entry name" value="Mur_ligase_C_dom_sf"/>
</dbReference>
<dbReference type="NCBIfam" id="TIGR01499">
    <property type="entry name" value="folC"/>
    <property type="match status" value="1"/>
</dbReference>
<dbReference type="PANTHER" id="PTHR11136:SF5">
    <property type="entry name" value="FOLYLPOLYGLUTAMATE SYNTHASE, MITOCHONDRIAL"/>
    <property type="match status" value="1"/>
</dbReference>
<dbReference type="PANTHER" id="PTHR11136">
    <property type="entry name" value="FOLYLPOLYGLUTAMATE SYNTHASE-RELATED"/>
    <property type="match status" value="1"/>
</dbReference>
<dbReference type="PIRSF" id="PIRSF038895">
    <property type="entry name" value="FPGS"/>
    <property type="match status" value="1"/>
</dbReference>
<dbReference type="SUPFAM" id="SSF53623">
    <property type="entry name" value="MurD-like peptide ligases, catalytic domain"/>
    <property type="match status" value="1"/>
</dbReference>
<dbReference type="SUPFAM" id="SSF53244">
    <property type="entry name" value="MurD-like peptide ligases, peptide-binding domain"/>
    <property type="match status" value="1"/>
</dbReference>
<dbReference type="PROSITE" id="PS01011">
    <property type="entry name" value="FOLYLPOLYGLU_SYNT_1"/>
    <property type="match status" value="1"/>
</dbReference>
<dbReference type="PROSITE" id="PS01012">
    <property type="entry name" value="FOLYLPOLYGLU_SYNT_2"/>
    <property type="match status" value="1"/>
</dbReference>
<accession>A6ZP80</accession>
<protein>
    <recommendedName>
        <fullName evidence="2 3">Folylpolyglutamate synthase</fullName>
        <ecNumber evidence="2">6.3.2.17</ecNumber>
    </recommendedName>
    <alternativeName>
        <fullName evidence="2">Folylpoly-gamma-glutamate synthetase</fullName>
        <shortName evidence="2">FPGS</shortName>
    </alternativeName>
    <alternativeName>
        <fullName evidence="2">Tetrahydrofolylpolyglutamate synthase</fullName>
        <shortName evidence="2">Tetrahydrofolate synthase</shortName>
    </alternativeName>
</protein>
<comment type="function">
    <text evidence="2">Catalyzes conversion of folates to polyglutamate derivatives allowing concentration of folate compounds in the cell and the intracellular retention of these cofactors, which are important substrates for most of the folate-dependent enzymes that are involved in one-carbon transfer reactions involved in purine, pyrimidine and amino acid synthesis. Required for methionine synthesis and maintenance of intact mitochondrial DNA. Involved in telomere maintenance (By similarity).</text>
</comment>
<comment type="catalytic activity">
    <reaction evidence="2">
        <text>(6S)-5,6,7,8-tetrahydrofolyl-(gamma-L-Glu)(n) + L-glutamate + ATP = (6S)-5,6,7,8-tetrahydrofolyl-(gamma-L-Glu)(n+1) + ADP + phosphate + H(+)</text>
        <dbReference type="Rhea" id="RHEA:10580"/>
        <dbReference type="Rhea" id="RHEA-COMP:14738"/>
        <dbReference type="Rhea" id="RHEA-COMP:14740"/>
        <dbReference type="ChEBI" id="CHEBI:15378"/>
        <dbReference type="ChEBI" id="CHEBI:29985"/>
        <dbReference type="ChEBI" id="CHEBI:30616"/>
        <dbReference type="ChEBI" id="CHEBI:43474"/>
        <dbReference type="ChEBI" id="CHEBI:141005"/>
        <dbReference type="ChEBI" id="CHEBI:456216"/>
        <dbReference type="EC" id="6.3.2.17"/>
    </reaction>
</comment>
<comment type="cofactor">
    <cofactor evidence="2">
        <name>a monovalent cation</name>
        <dbReference type="ChEBI" id="CHEBI:60242"/>
    </cofactor>
    <text evidence="2">A monovalent cation.</text>
</comment>
<comment type="pathway">
    <text evidence="2">Cofactor biosynthesis; tetrahydrofolylpolyglutamate biosynthesis.</text>
</comment>
<comment type="subcellular location">
    <subcellularLocation>
        <location evidence="2">Mitochondrion inner membrane</location>
    </subcellularLocation>
    <subcellularLocation>
        <location evidence="2">Mitochondrion matrix</location>
    </subcellularLocation>
    <subcellularLocation>
        <location evidence="2">Cytoplasm</location>
    </subcellularLocation>
</comment>
<comment type="similarity">
    <text evidence="2">Belongs to the folylpolyglutamate synthase family.</text>
</comment>
<name>FOLE_YEAS7</name>
<organism>
    <name type="scientific">Saccharomyces cerevisiae (strain YJM789)</name>
    <name type="common">Baker's yeast</name>
    <dbReference type="NCBI Taxonomy" id="307796"/>
    <lineage>
        <taxon>Eukaryota</taxon>
        <taxon>Fungi</taxon>
        <taxon>Dikarya</taxon>
        <taxon>Ascomycota</taxon>
        <taxon>Saccharomycotina</taxon>
        <taxon>Saccharomycetes</taxon>
        <taxon>Saccharomycetales</taxon>
        <taxon>Saccharomycetaceae</taxon>
        <taxon>Saccharomyces</taxon>
    </lineage>
</organism>
<gene>
    <name type="primary">MET7</name>
    <name type="ORF">SCY_5295</name>
</gene>
<feature type="chain" id="PRO_0000414495" description="Folylpolyglutamate synthase">
    <location>
        <begin position="1"/>
        <end position="548"/>
    </location>
</feature>
<feature type="binding site" evidence="1">
    <location>
        <begin position="130"/>
        <end position="133"/>
    </location>
    <ligand>
        <name>ATP</name>
        <dbReference type="ChEBI" id="CHEBI:30616"/>
    </ligand>
</feature>
<feature type="binding site" evidence="1">
    <location>
        <position position="157"/>
    </location>
    <ligand>
        <name>Mg(2+)</name>
        <dbReference type="ChEBI" id="CHEBI:18420"/>
        <label>1</label>
    </ligand>
</feature>
<feature type="binding site" evidence="1">
    <location>
        <position position="234"/>
    </location>
    <ligand>
        <name>Mg(2+)</name>
        <dbReference type="ChEBI" id="CHEBI:18420"/>
        <label>1</label>
    </ligand>
</feature>
<feature type="binding site" evidence="1">
    <location>
        <position position="262"/>
    </location>
    <ligand>
        <name>Mg(2+)</name>
        <dbReference type="ChEBI" id="CHEBI:18420"/>
        <label>2</label>
    </ligand>
</feature>
<feature type="binding site" evidence="1">
    <location>
        <position position="382"/>
    </location>
    <ligand>
        <name>ATP</name>
        <dbReference type="ChEBI" id="CHEBI:30616"/>
    </ligand>
</feature>
<feature type="binding site" evidence="1">
    <location>
        <position position="396"/>
    </location>
    <ligand>
        <name>ATP</name>
        <dbReference type="ChEBI" id="CHEBI:30616"/>
    </ligand>
</feature>
<proteinExistence type="inferred from homology"/>
<reference evidence="3" key="1">
    <citation type="journal article" date="2007" name="Proc. Natl. Acad. Sci. U.S.A.">
        <title>Genome sequencing and comparative analysis of Saccharomyces cerevisiae strain YJM789.</title>
        <authorList>
            <person name="Wei W."/>
            <person name="McCusker J.H."/>
            <person name="Hyman R.W."/>
            <person name="Jones T."/>
            <person name="Ning Y."/>
            <person name="Cao Z."/>
            <person name="Gu Z."/>
            <person name="Bruno D."/>
            <person name="Miranda M."/>
            <person name="Nguyen M."/>
            <person name="Wilhelmy J."/>
            <person name="Komp C."/>
            <person name="Tamse R."/>
            <person name="Wang X."/>
            <person name="Jia P."/>
            <person name="Luedi P."/>
            <person name="Oefner P.J."/>
            <person name="David L."/>
            <person name="Dietrich F.S."/>
            <person name="Li Y."/>
            <person name="Davis R.W."/>
            <person name="Steinmetz L.M."/>
        </authorList>
    </citation>
    <scope>NUCLEOTIDE SEQUENCE [LARGE SCALE GENOMIC DNA]</scope>
    <source>
        <strain>YJM789</strain>
    </source>
</reference>
<keyword id="KW-0067">ATP-binding</keyword>
<keyword id="KW-0963">Cytoplasm</keyword>
<keyword id="KW-0436">Ligase</keyword>
<keyword id="KW-0460">Magnesium</keyword>
<keyword id="KW-0472">Membrane</keyword>
<keyword id="KW-0479">Metal-binding</keyword>
<keyword id="KW-0496">Mitochondrion</keyword>
<keyword id="KW-0999">Mitochondrion inner membrane</keyword>
<keyword id="KW-0547">Nucleotide-binding</keyword>
<keyword id="KW-0554">One-carbon metabolism</keyword>